<accession>D5AKY0</accession>
<organism>
    <name type="scientific">Rhodobacter capsulatus (strain ATCC BAA-309 / NBRC 16581 / SB1003)</name>
    <dbReference type="NCBI Taxonomy" id="272942"/>
    <lineage>
        <taxon>Bacteria</taxon>
        <taxon>Pseudomonadati</taxon>
        <taxon>Pseudomonadota</taxon>
        <taxon>Alphaproteobacteria</taxon>
        <taxon>Rhodobacterales</taxon>
        <taxon>Rhodobacter group</taxon>
        <taxon>Rhodobacter</taxon>
    </lineage>
</organism>
<evidence type="ECO:0000250" key="1"/>
<evidence type="ECO:0000250" key="2">
    <source>
        <dbReference type="UniProtKB" id="Q9APM5"/>
    </source>
</evidence>
<evidence type="ECO:0000269" key="3">
    <source>
    </source>
</evidence>
<evidence type="ECO:0000303" key="4">
    <source>
    </source>
</evidence>
<evidence type="ECO:0000305" key="5"/>
<evidence type="ECO:0000312" key="6">
    <source>
        <dbReference type="EMBL" id="ADE85970.1"/>
    </source>
</evidence>
<name>TPA_RHOCB</name>
<comment type="function">
    <text evidence="2">Catalyzes the degradation of taurine into alanine and sulfoacetaldehyde.</text>
</comment>
<comment type="catalytic activity">
    <reaction evidence="2">
        <text>taurine + pyruvate = sulfoacetaldehyde + L-alanine</text>
        <dbReference type="Rhea" id="RHEA:10420"/>
        <dbReference type="ChEBI" id="CHEBI:15361"/>
        <dbReference type="ChEBI" id="CHEBI:57972"/>
        <dbReference type="ChEBI" id="CHEBI:58246"/>
        <dbReference type="ChEBI" id="CHEBI:507393"/>
        <dbReference type="EC" id="2.6.1.77"/>
    </reaction>
</comment>
<comment type="cofactor">
    <cofactor evidence="2">
        <name>pyridoxal 5'-phosphate</name>
        <dbReference type="ChEBI" id="CHEBI:597326"/>
    </cofactor>
</comment>
<comment type="pathway">
    <text evidence="2">Organosulfur degradation; taurine degradation via aerobic pathway; acetyl phosphate and sulfite from taurine: step 1/2.</text>
</comment>
<comment type="subcellular location">
    <subcellularLocation>
        <location evidence="2">Cytoplasm</location>
    </subcellularLocation>
</comment>
<comment type="induction">
    <text evidence="3">Induced by taurine via TauR.</text>
</comment>
<comment type="similarity">
    <text evidence="5">Belongs to the class-III pyridoxal-phosphate-dependent aminotransferase family.</text>
</comment>
<keyword id="KW-0032">Aminotransferase</keyword>
<keyword id="KW-0963">Cytoplasm</keyword>
<keyword id="KW-0663">Pyridoxal phosphate</keyword>
<keyword id="KW-1185">Reference proteome</keyword>
<keyword id="KW-0808">Transferase</keyword>
<feature type="chain" id="PRO_0000430552" description="Taurine--pyruvate aminotransferase">
    <location>
        <begin position="1"/>
        <end position="459"/>
    </location>
</feature>
<feature type="modified residue" description="N6-(pyridoxal phosphate)lysine" evidence="1">
    <location>
        <position position="287"/>
    </location>
</feature>
<gene>
    <name evidence="4" type="primary">tpa</name>
    <name evidence="6" type="ordered locus">RCAP_rcc02240</name>
</gene>
<proteinExistence type="evidence at transcript level"/>
<reference key="1">
    <citation type="journal article" date="2010" name="J. Bacteriol.">
        <title>Complete genome sequence of the photosynthetic purple nonsulfur bacterium Rhodobacter capsulatus SB 1003.</title>
        <authorList>
            <person name="Strnad H."/>
            <person name="Lapidus A."/>
            <person name="Paces J."/>
            <person name="Ulbrich P."/>
            <person name="Vlcek C."/>
            <person name="Paces V."/>
            <person name="Haselkorn R."/>
        </authorList>
    </citation>
    <scope>NUCLEOTIDE SEQUENCE [LARGE SCALE GENOMIC DNA]</scope>
    <source>
        <strain>ATCC BAA-309 / NBRC 16581 / SB1003</strain>
    </source>
</reference>
<reference key="2">
    <citation type="journal article" date="2008" name="J. Bacteriol.">
        <title>The GntR-like regulator TauR activates expression of taurine utilization genes in Rhodobacter capsulatus.</title>
        <authorList>
            <person name="Wiethaus J."/>
            <person name="Schubert B."/>
            <person name="Pfaender Y."/>
            <person name="Narberhaus F."/>
            <person name="Masepohl B."/>
        </authorList>
    </citation>
    <scope>INDUCTION</scope>
    <source>
        <strain>B10S</strain>
    </source>
</reference>
<dbReference type="EC" id="2.6.1.77" evidence="2"/>
<dbReference type="EMBL" id="CP001312">
    <property type="protein sequence ID" value="ADE85970.1"/>
    <property type="molecule type" value="Genomic_DNA"/>
</dbReference>
<dbReference type="RefSeq" id="WP_013067949.1">
    <property type="nucleotide sequence ID" value="NC_014034.1"/>
</dbReference>
<dbReference type="SMR" id="D5AKY0"/>
<dbReference type="STRING" id="272942.RCAP_rcc02240"/>
<dbReference type="GeneID" id="31491082"/>
<dbReference type="KEGG" id="rcp:RCAP_rcc02240"/>
<dbReference type="eggNOG" id="COG0161">
    <property type="taxonomic scope" value="Bacteria"/>
</dbReference>
<dbReference type="HOGENOM" id="CLU_016922_4_0_5"/>
<dbReference type="OrthoDB" id="9801834at2"/>
<dbReference type="UniPathway" id="UPA00336">
    <property type="reaction ID" value="UER00543"/>
</dbReference>
<dbReference type="Proteomes" id="UP000002361">
    <property type="component" value="Chromosome"/>
</dbReference>
<dbReference type="GO" id="GO:0005737">
    <property type="term" value="C:cytoplasm"/>
    <property type="evidence" value="ECO:0007669"/>
    <property type="project" value="UniProtKB-SubCell"/>
</dbReference>
<dbReference type="GO" id="GO:0030170">
    <property type="term" value="F:pyridoxal phosphate binding"/>
    <property type="evidence" value="ECO:0007669"/>
    <property type="project" value="InterPro"/>
</dbReference>
<dbReference type="GO" id="GO:0031299">
    <property type="term" value="F:taurine-pyruvate aminotransferase activity"/>
    <property type="evidence" value="ECO:0007669"/>
    <property type="project" value="UniProtKB-EC"/>
</dbReference>
<dbReference type="CDD" id="cd00610">
    <property type="entry name" value="OAT_like"/>
    <property type="match status" value="1"/>
</dbReference>
<dbReference type="Gene3D" id="3.90.1150.10">
    <property type="entry name" value="Aspartate Aminotransferase, domain 1"/>
    <property type="match status" value="1"/>
</dbReference>
<dbReference type="Gene3D" id="3.40.640.10">
    <property type="entry name" value="Type I PLP-dependent aspartate aminotransferase-like (Major domain)"/>
    <property type="match status" value="1"/>
</dbReference>
<dbReference type="InterPro" id="IPR005814">
    <property type="entry name" value="Aminotrans_3"/>
</dbReference>
<dbReference type="InterPro" id="IPR049704">
    <property type="entry name" value="Aminotrans_3_PPA_site"/>
</dbReference>
<dbReference type="InterPro" id="IPR015424">
    <property type="entry name" value="PyrdxlP-dep_Trfase"/>
</dbReference>
<dbReference type="InterPro" id="IPR015421">
    <property type="entry name" value="PyrdxlP-dep_Trfase_major"/>
</dbReference>
<dbReference type="InterPro" id="IPR015422">
    <property type="entry name" value="PyrdxlP-dep_Trfase_small"/>
</dbReference>
<dbReference type="PANTHER" id="PTHR43094">
    <property type="entry name" value="AMINOTRANSFERASE"/>
    <property type="match status" value="1"/>
</dbReference>
<dbReference type="PANTHER" id="PTHR43094:SF1">
    <property type="entry name" value="AMINOTRANSFERASE CLASS-III"/>
    <property type="match status" value="1"/>
</dbReference>
<dbReference type="Pfam" id="PF00202">
    <property type="entry name" value="Aminotran_3"/>
    <property type="match status" value="1"/>
</dbReference>
<dbReference type="PIRSF" id="PIRSF000521">
    <property type="entry name" value="Transaminase_4ab_Lys_Orn"/>
    <property type="match status" value="1"/>
</dbReference>
<dbReference type="SUPFAM" id="SSF53383">
    <property type="entry name" value="PLP-dependent transferases"/>
    <property type="match status" value="1"/>
</dbReference>
<dbReference type="PROSITE" id="PS00600">
    <property type="entry name" value="AA_TRANSFER_CLASS_3"/>
    <property type="match status" value="1"/>
</dbReference>
<sequence>MHAAPIPQDAAPIIAADRAHVWHHLSQHKPYETSDPRVFVEGRGMRLWDATGREFLDATSGGVWTVNLGYGRKDVVEAVAAQLLALPYYAGAAGTVPGARYAEALIAKMPGLSRVYYSNSGSEANEKVYKMVRQISHRHHGGRKGKILFRERDYHGTTIAALATSGQAQRAEHYGPFPDGFVSVPHCLEYRAQWDCANYGERAADAIEEVILREGPDSIGCLVLEPITAGGGVIVPPAGYWEKVSHICRKYNILLHLDEVVCGLGRTGAWFGYQHYGIQPDFVTMAKGVAAGYAAISCTVTTEAVFELFKDAPSDPLCHFRDISTFGGCTAGPAAALETLRIIEEEGLLQNTAQMGERLLANLRDLAERHAVIGDVRGKGLFCGAELVADRRTKEPLAEAKVQAVVADCAAQGVLIGATNRSIPGLNTTLCLAPALIASEAEIDRITETIDAALRRLAA</sequence>
<protein>
    <recommendedName>
        <fullName evidence="2">Taurine--pyruvate aminotransferase</fullName>
        <ecNumber evidence="2">2.6.1.77</ecNumber>
    </recommendedName>
</protein>